<evidence type="ECO:0000255" key="1">
    <source>
        <dbReference type="HAMAP-Rule" id="MF_00741"/>
    </source>
</evidence>
<comment type="catalytic activity">
    <reaction evidence="1">
        <text>2-formamido-N(1)-(5-O-phospho-beta-D-ribosyl)acetamidine + ATP = 5-amino-1-(5-phospho-beta-D-ribosyl)imidazole + ADP + phosphate + H(+)</text>
        <dbReference type="Rhea" id="RHEA:23032"/>
        <dbReference type="ChEBI" id="CHEBI:15378"/>
        <dbReference type="ChEBI" id="CHEBI:30616"/>
        <dbReference type="ChEBI" id="CHEBI:43474"/>
        <dbReference type="ChEBI" id="CHEBI:137981"/>
        <dbReference type="ChEBI" id="CHEBI:147287"/>
        <dbReference type="ChEBI" id="CHEBI:456216"/>
        <dbReference type="EC" id="6.3.3.1"/>
    </reaction>
</comment>
<comment type="pathway">
    <text evidence="1">Purine metabolism; IMP biosynthesis via de novo pathway; 5-amino-1-(5-phospho-D-ribosyl)imidazole from N(2)-formyl-N(1)-(5-phospho-D-ribosyl)glycinamide: step 2/2.</text>
</comment>
<comment type="subcellular location">
    <subcellularLocation>
        <location evidence="1">Cytoplasm</location>
    </subcellularLocation>
</comment>
<comment type="similarity">
    <text evidence="1">Belongs to the AIR synthase family.</text>
</comment>
<organism>
    <name type="scientific">Xanthomonas oryzae pv. oryzae (strain MAFF 311018)</name>
    <dbReference type="NCBI Taxonomy" id="342109"/>
    <lineage>
        <taxon>Bacteria</taxon>
        <taxon>Pseudomonadati</taxon>
        <taxon>Pseudomonadota</taxon>
        <taxon>Gammaproteobacteria</taxon>
        <taxon>Lysobacterales</taxon>
        <taxon>Lysobacteraceae</taxon>
        <taxon>Xanthomonas</taxon>
    </lineage>
</organism>
<proteinExistence type="inferred from homology"/>
<sequence>MTYRDAGVDIDAGNALVERIKPLVKRSFRPEVMGGLGGFGALFDLSGKYKEPVLVSGTDGVGTKLKLAQQLGRHDTIGIDLVGMCVNDVLVQGAEPLFFLDYFATGKLDVDTAAAVVGGIARGCALSGCALIGGETAEMPDMYPPGEYDLAGFTVGAVEKSQLLDGAQVRDGDVLIGIASSGPHSNGYSLIRKIYERAGAPAEHVLDDGTKLIDALMAPTALYVKPVLALLKSHGQAIHAMAHITGGGLTENIIRVIPDGLGLDIDASAWTLPPVFAWLQREGAVADAEMWRTFNCGIGFVLIAAPAEAAALEQALDAQSLAHWRIGQVVPAHGDERVRID</sequence>
<reference key="1">
    <citation type="journal article" date="2005" name="Jpn. Agric. Res. Q.">
        <title>Genome sequence of Xanthomonas oryzae pv. oryzae suggests contribution of large numbers of effector genes and insertion sequences to its race diversity.</title>
        <authorList>
            <person name="Ochiai H."/>
            <person name="Inoue Y."/>
            <person name="Takeya M."/>
            <person name="Sasaki A."/>
            <person name="Kaku H."/>
        </authorList>
    </citation>
    <scope>NUCLEOTIDE SEQUENCE [LARGE SCALE GENOMIC DNA]</scope>
    <source>
        <strain>MAFF 311018</strain>
    </source>
</reference>
<accession>Q2P674</accession>
<dbReference type="EC" id="6.3.3.1" evidence="1"/>
<dbReference type="EMBL" id="AP008229">
    <property type="protein sequence ID" value="BAE67953.1"/>
    <property type="molecule type" value="Genomic_DNA"/>
</dbReference>
<dbReference type="SMR" id="Q2P674"/>
<dbReference type="KEGG" id="xom:XOO1198"/>
<dbReference type="HOGENOM" id="CLU_047116_0_0_6"/>
<dbReference type="UniPathway" id="UPA00074">
    <property type="reaction ID" value="UER00129"/>
</dbReference>
<dbReference type="GO" id="GO:0005829">
    <property type="term" value="C:cytosol"/>
    <property type="evidence" value="ECO:0007669"/>
    <property type="project" value="TreeGrafter"/>
</dbReference>
<dbReference type="GO" id="GO:0005524">
    <property type="term" value="F:ATP binding"/>
    <property type="evidence" value="ECO:0007669"/>
    <property type="project" value="UniProtKB-KW"/>
</dbReference>
<dbReference type="GO" id="GO:0004637">
    <property type="term" value="F:phosphoribosylamine-glycine ligase activity"/>
    <property type="evidence" value="ECO:0007669"/>
    <property type="project" value="TreeGrafter"/>
</dbReference>
<dbReference type="GO" id="GO:0004641">
    <property type="term" value="F:phosphoribosylformylglycinamidine cyclo-ligase activity"/>
    <property type="evidence" value="ECO:0007669"/>
    <property type="project" value="UniProtKB-UniRule"/>
</dbReference>
<dbReference type="GO" id="GO:0006189">
    <property type="term" value="P:'de novo' IMP biosynthetic process"/>
    <property type="evidence" value="ECO:0007669"/>
    <property type="project" value="UniProtKB-UniRule"/>
</dbReference>
<dbReference type="GO" id="GO:0046084">
    <property type="term" value="P:adenine biosynthetic process"/>
    <property type="evidence" value="ECO:0007669"/>
    <property type="project" value="TreeGrafter"/>
</dbReference>
<dbReference type="CDD" id="cd02196">
    <property type="entry name" value="PurM"/>
    <property type="match status" value="1"/>
</dbReference>
<dbReference type="FunFam" id="3.30.1330.10:FF:000001">
    <property type="entry name" value="Phosphoribosylformylglycinamidine cyclo-ligase"/>
    <property type="match status" value="1"/>
</dbReference>
<dbReference type="FunFam" id="3.90.650.10:FF:000001">
    <property type="entry name" value="Phosphoribosylformylglycinamidine cyclo-ligase"/>
    <property type="match status" value="1"/>
</dbReference>
<dbReference type="Gene3D" id="3.90.650.10">
    <property type="entry name" value="PurM-like C-terminal domain"/>
    <property type="match status" value="1"/>
</dbReference>
<dbReference type="Gene3D" id="3.30.1330.10">
    <property type="entry name" value="PurM-like, N-terminal domain"/>
    <property type="match status" value="1"/>
</dbReference>
<dbReference type="HAMAP" id="MF_00741">
    <property type="entry name" value="AIRS"/>
    <property type="match status" value="1"/>
</dbReference>
<dbReference type="InterPro" id="IPR010918">
    <property type="entry name" value="PurM-like_C_dom"/>
</dbReference>
<dbReference type="InterPro" id="IPR036676">
    <property type="entry name" value="PurM-like_C_sf"/>
</dbReference>
<dbReference type="InterPro" id="IPR016188">
    <property type="entry name" value="PurM-like_N"/>
</dbReference>
<dbReference type="InterPro" id="IPR036921">
    <property type="entry name" value="PurM-like_N_sf"/>
</dbReference>
<dbReference type="InterPro" id="IPR004733">
    <property type="entry name" value="PurM_cligase"/>
</dbReference>
<dbReference type="NCBIfam" id="TIGR00878">
    <property type="entry name" value="purM"/>
    <property type="match status" value="1"/>
</dbReference>
<dbReference type="PANTHER" id="PTHR10520:SF12">
    <property type="entry name" value="TRIFUNCTIONAL PURINE BIOSYNTHETIC PROTEIN ADENOSINE-3"/>
    <property type="match status" value="1"/>
</dbReference>
<dbReference type="PANTHER" id="PTHR10520">
    <property type="entry name" value="TRIFUNCTIONAL PURINE BIOSYNTHETIC PROTEIN ADENOSINE-3-RELATED"/>
    <property type="match status" value="1"/>
</dbReference>
<dbReference type="Pfam" id="PF00586">
    <property type="entry name" value="AIRS"/>
    <property type="match status" value="1"/>
</dbReference>
<dbReference type="Pfam" id="PF02769">
    <property type="entry name" value="AIRS_C"/>
    <property type="match status" value="1"/>
</dbReference>
<dbReference type="SUPFAM" id="SSF56042">
    <property type="entry name" value="PurM C-terminal domain-like"/>
    <property type="match status" value="1"/>
</dbReference>
<dbReference type="SUPFAM" id="SSF55326">
    <property type="entry name" value="PurM N-terminal domain-like"/>
    <property type="match status" value="1"/>
</dbReference>
<feature type="chain" id="PRO_0000258432" description="Phosphoribosylformylglycinamidine cyclo-ligase">
    <location>
        <begin position="1"/>
        <end position="341"/>
    </location>
</feature>
<name>PUR5_XANOM</name>
<keyword id="KW-0067">ATP-binding</keyword>
<keyword id="KW-0963">Cytoplasm</keyword>
<keyword id="KW-0436">Ligase</keyword>
<keyword id="KW-0547">Nucleotide-binding</keyword>
<keyword id="KW-0658">Purine biosynthesis</keyword>
<gene>
    <name evidence="1" type="primary">purM</name>
    <name type="ordered locus">XOO1198</name>
</gene>
<protein>
    <recommendedName>
        <fullName evidence="1">Phosphoribosylformylglycinamidine cyclo-ligase</fullName>
        <ecNumber evidence="1">6.3.3.1</ecNumber>
    </recommendedName>
    <alternativeName>
        <fullName evidence="1">AIR synthase</fullName>
    </alternativeName>
    <alternativeName>
        <fullName evidence="1">AIRS</fullName>
    </alternativeName>
    <alternativeName>
        <fullName evidence="1">Phosphoribosyl-aminoimidazole synthetase</fullName>
    </alternativeName>
</protein>